<keyword id="KW-1003">Cell membrane</keyword>
<keyword id="KW-0472">Membrane</keyword>
<comment type="function">
    <text>May have a regulatory bifunctional role.</text>
</comment>
<comment type="subcellular location">
    <subcellularLocation>
        <location evidence="1">Cell membrane</location>
        <topology evidence="1">Peripheral membrane protein</topology>
    </subcellularLocation>
</comment>
<comment type="similarity">
    <text evidence="4">Belongs to the CAP family.</text>
</comment>
<gene>
    <name type="primary">CAP</name>
</gene>
<organism>
    <name type="scientific">Hydra viridissima</name>
    <name type="common">Green hydra</name>
    <name type="synonym">Chlorohydra viridissima</name>
    <dbReference type="NCBI Taxonomy" id="6082"/>
    <lineage>
        <taxon>Eukaryota</taxon>
        <taxon>Metazoa</taxon>
        <taxon>Cnidaria</taxon>
        <taxon>Hydrozoa</taxon>
        <taxon>Hydroidolina</taxon>
        <taxon>Anthoathecata</taxon>
        <taxon>Aplanulata</taxon>
        <taxon>Hydridae</taxon>
        <taxon>Hydra</taxon>
    </lineage>
</organism>
<reference key="1">
    <citation type="journal article" date="1994" name="Mech. Dev.">
        <title>The role of the cAMP pathway in mediating the effect of head activator on nerve-cell determination and differentiation in hydra.</title>
        <authorList>
            <person name="Fenger U."/>
            <person name="Hofmann M."/>
            <person name="Galliot B."/>
            <person name="Schaller H.C."/>
        </authorList>
    </citation>
    <scope>NUCLEOTIDE SEQUENCE [MRNA]</scope>
</reference>
<accession>P40122</accession>
<proteinExistence type="evidence at transcript level"/>
<name>CAP_HYDVD</name>
<feature type="chain" id="PRO_0000205703" description="Adenylyl cyclase-associated protein">
    <location>
        <begin position="1"/>
        <end position="481"/>
    </location>
</feature>
<feature type="domain" description="C-CAP/cofactor C-like" evidence="2">
    <location>
        <begin position="319"/>
        <end position="457"/>
    </location>
</feature>
<feature type="region of interest" description="Disordered" evidence="3">
    <location>
        <begin position="216"/>
        <end position="257"/>
    </location>
</feature>
<feature type="region of interest" description="Disordered" evidence="3">
    <location>
        <begin position="276"/>
        <end position="315"/>
    </location>
</feature>
<feature type="compositionally biased region" description="Pro residues" evidence="3">
    <location>
        <begin position="220"/>
        <end position="238"/>
    </location>
</feature>
<feature type="compositionally biased region" description="Polar residues" evidence="3">
    <location>
        <begin position="240"/>
        <end position="250"/>
    </location>
</feature>
<feature type="compositionally biased region" description="Basic and acidic residues" evidence="3">
    <location>
        <begin position="276"/>
        <end position="287"/>
    </location>
</feature>
<protein>
    <recommendedName>
        <fullName>Adenylyl cyclase-associated protein</fullName>
        <shortName>CAP</shortName>
    </recommendedName>
</protein>
<sequence>MEQLVSRLEAVTNRLEAVASRGGGSTIKAAVDDDPAWFDDFKVFNAKFLSGFVNDTIALGGELEQMGKFVNEAFHCHLVLMEVAARHNRPSQTDLEGLLKPLSEAISKVQDFREKNRSSKQFNHLSAISEGLPFLGWVGVAPKPVLYIQQMEESAQFYTNKLLKEFRESDPKQANWATSFIQLLKGFAAYVKDHHQAGLMWNKEKSAATPAALAVSAHKPPVPPPPSGFAPPPPPPIQAPTVTHAVTGSHSSEDSRSQLFAQLSKGSEVTAGLKKVTDDMKTHKNPELRNQPPLKSSALDPRPYTPPNLKKFSAPVSKPAKKPALFQLQNKKWVIENQDGNTNLEISECNDKQTVYMYKCHASKVHINGKVNSIILDSCEKCVIEFTDVISTFEFTNCKACKVQIDGFAPTISIEKTDGAQVFINPKCLESQIVTAKSSEMNICVMKPDGDLTEYPLPEQFKTVWNPATSKFITTTMDLNL</sequence>
<evidence type="ECO:0000250" key="1"/>
<evidence type="ECO:0000255" key="2">
    <source>
        <dbReference type="PROSITE-ProRule" id="PRU00659"/>
    </source>
</evidence>
<evidence type="ECO:0000256" key="3">
    <source>
        <dbReference type="SAM" id="MobiDB-lite"/>
    </source>
</evidence>
<evidence type="ECO:0000305" key="4"/>
<dbReference type="EMBL" id="X79567">
    <property type="protein sequence ID" value="CAA56104.1"/>
    <property type="molecule type" value="mRNA"/>
</dbReference>
<dbReference type="PIR" id="S47091">
    <property type="entry name" value="S47091"/>
</dbReference>
<dbReference type="SMR" id="P40122"/>
<dbReference type="GO" id="GO:0005737">
    <property type="term" value="C:cytoplasm"/>
    <property type="evidence" value="ECO:0007669"/>
    <property type="project" value="TreeGrafter"/>
</dbReference>
<dbReference type="GO" id="GO:0005886">
    <property type="term" value="C:plasma membrane"/>
    <property type="evidence" value="ECO:0007669"/>
    <property type="project" value="UniProtKB-SubCell"/>
</dbReference>
<dbReference type="GO" id="GO:0003779">
    <property type="term" value="F:actin binding"/>
    <property type="evidence" value="ECO:0007669"/>
    <property type="project" value="InterPro"/>
</dbReference>
<dbReference type="GO" id="GO:0008179">
    <property type="term" value="F:adenylate cyclase binding"/>
    <property type="evidence" value="ECO:0007669"/>
    <property type="project" value="TreeGrafter"/>
</dbReference>
<dbReference type="GO" id="GO:0007015">
    <property type="term" value="P:actin filament organization"/>
    <property type="evidence" value="ECO:0007669"/>
    <property type="project" value="TreeGrafter"/>
</dbReference>
<dbReference type="GO" id="GO:0019933">
    <property type="term" value="P:cAMP-mediated signaling"/>
    <property type="evidence" value="ECO:0007669"/>
    <property type="project" value="TreeGrafter"/>
</dbReference>
<dbReference type="GO" id="GO:0000902">
    <property type="term" value="P:cell morphogenesis"/>
    <property type="evidence" value="ECO:0007669"/>
    <property type="project" value="TreeGrafter"/>
</dbReference>
<dbReference type="FunFam" id="1.25.40.330:FF:000001">
    <property type="entry name" value="Adenylyl cyclase-associated protein"/>
    <property type="match status" value="1"/>
</dbReference>
<dbReference type="Gene3D" id="2.160.20.70">
    <property type="match status" value="1"/>
</dbReference>
<dbReference type="Gene3D" id="1.25.40.330">
    <property type="entry name" value="Adenylate cyclase-associated CAP, N-terminal domain"/>
    <property type="match status" value="1"/>
</dbReference>
<dbReference type="InterPro" id="IPR001837">
    <property type="entry name" value="Adenylate_cyclase-assoc_CAP"/>
</dbReference>
<dbReference type="InterPro" id="IPR013912">
    <property type="entry name" value="Adenylate_cyclase-assoc_CAP_C"/>
</dbReference>
<dbReference type="InterPro" id="IPR013992">
    <property type="entry name" value="Adenylate_cyclase-assoc_CAP_N"/>
</dbReference>
<dbReference type="InterPro" id="IPR017901">
    <property type="entry name" value="C-CAP_CF_C-like"/>
</dbReference>
<dbReference type="InterPro" id="IPR016098">
    <property type="entry name" value="CAP/MinC_C"/>
</dbReference>
<dbReference type="InterPro" id="IPR036223">
    <property type="entry name" value="CAP_C_sf"/>
</dbReference>
<dbReference type="InterPro" id="IPR028417">
    <property type="entry name" value="CAP_CS_C"/>
</dbReference>
<dbReference type="InterPro" id="IPR018106">
    <property type="entry name" value="CAP_CS_N"/>
</dbReference>
<dbReference type="InterPro" id="IPR053950">
    <property type="entry name" value="CAP_N"/>
</dbReference>
<dbReference type="InterPro" id="IPR036222">
    <property type="entry name" value="CAP_N_sf"/>
</dbReference>
<dbReference type="InterPro" id="IPR006599">
    <property type="entry name" value="CARP_motif"/>
</dbReference>
<dbReference type="PANTHER" id="PTHR10652">
    <property type="entry name" value="ADENYLYL CYCLASE-ASSOCIATED PROTEIN"/>
    <property type="match status" value="1"/>
</dbReference>
<dbReference type="PANTHER" id="PTHR10652:SF0">
    <property type="entry name" value="ADENYLYL CYCLASE-ASSOCIATED PROTEIN"/>
    <property type="match status" value="1"/>
</dbReference>
<dbReference type="Pfam" id="PF08603">
    <property type="entry name" value="CAP_C"/>
    <property type="match status" value="1"/>
</dbReference>
<dbReference type="Pfam" id="PF21938">
    <property type="entry name" value="CAP_N"/>
    <property type="match status" value="1"/>
</dbReference>
<dbReference type="Pfam" id="PF01213">
    <property type="entry name" value="CAP_N-CM"/>
    <property type="match status" value="1"/>
</dbReference>
<dbReference type="SMART" id="SM00673">
    <property type="entry name" value="CARP"/>
    <property type="match status" value="2"/>
</dbReference>
<dbReference type="SUPFAM" id="SSF69340">
    <property type="entry name" value="C-terminal domain of adenylylcyclase associated protein"/>
    <property type="match status" value="1"/>
</dbReference>
<dbReference type="SUPFAM" id="SSF101278">
    <property type="entry name" value="N-terminal domain of adenylylcyclase associated protein, CAP"/>
    <property type="match status" value="1"/>
</dbReference>
<dbReference type="PROSITE" id="PS51329">
    <property type="entry name" value="C_CAP_COFACTOR_C"/>
    <property type="match status" value="1"/>
</dbReference>
<dbReference type="PROSITE" id="PS01088">
    <property type="entry name" value="CAP_1"/>
    <property type="match status" value="1"/>
</dbReference>
<dbReference type="PROSITE" id="PS01089">
    <property type="entry name" value="CAP_2"/>
    <property type="match status" value="1"/>
</dbReference>